<gene>
    <name evidence="1" type="primary">napA</name>
    <name type="ordered locus">SeHA_C2499</name>
</gene>
<feature type="signal peptide" description="Tat-type signal" evidence="1">
    <location>
        <begin position="1"/>
        <end position="31"/>
    </location>
</feature>
<feature type="chain" id="PRO_1000186371" description="Periplasmic nitrate reductase" evidence="1">
    <location>
        <begin position="32"/>
        <end position="828"/>
    </location>
</feature>
<feature type="domain" description="4Fe-4S Mo/W bis-MGD-type" evidence="1">
    <location>
        <begin position="39"/>
        <end position="95"/>
    </location>
</feature>
<feature type="binding site" evidence="1">
    <location>
        <position position="46"/>
    </location>
    <ligand>
        <name>[4Fe-4S] cluster</name>
        <dbReference type="ChEBI" id="CHEBI:49883"/>
    </ligand>
</feature>
<feature type="binding site" evidence="1">
    <location>
        <position position="49"/>
    </location>
    <ligand>
        <name>[4Fe-4S] cluster</name>
        <dbReference type="ChEBI" id="CHEBI:49883"/>
    </ligand>
</feature>
<feature type="binding site" evidence="1">
    <location>
        <position position="53"/>
    </location>
    <ligand>
        <name>[4Fe-4S] cluster</name>
        <dbReference type="ChEBI" id="CHEBI:49883"/>
    </ligand>
</feature>
<feature type="binding site" evidence="1">
    <location>
        <position position="81"/>
    </location>
    <ligand>
        <name>[4Fe-4S] cluster</name>
        <dbReference type="ChEBI" id="CHEBI:49883"/>
    </ligand>
</feature>
<feature type="binding site" evidence="1">
    <location>
        <position position="83"/>
    </location>
    <ligand>
        <name>Mo-bis(molybdopterin guanine dinucleotide)</name>
        <dbReference type="ChEBI" id="CHEBI:60539"/>
    </ligand>
</feature>
<feature type="binding site" evidence="1">
    <location>
        <position position="150"/>
    </location>
    <ligand>
        <name>Mo-bis(molybdopterin guanine dinucleotide)</name>
        <dbReference type="ChEBI" id="CHEBI:60539"/>
    </ligand>
</feature>
<feature type="binding site" evidence="1">
    <location>
        <position position="175"/>
    </location>
    <ligand>
        <name>Mo-bis(molybdopterin guanine dinucleotide)</name>
        <dbReference type="ChEBI" id="CHEBI:60539"/>
    </ligand>
</feature>
<feature type="binding site" evidence="1">
    <location>
        <position position="179"/>
    </location>
    <ligand>
        <name>Mo-bis(molybdopterin guanine dinucleotide)</name>
        <dbReference type="ChEBI" id="CHEBI:60539"/>
    </ligand>
</feature>
<feature type="binding site" evidence="1">
    <location>
        <begin position="212"/>
        <end position="219"/>
    </location>
    <ligand>
        <name>Mo-bis(molybdopterin guanine dinucleotide)</name>
        <dbReference type="ChEBI" id="CHEBI:60539"/>
    </ligand>
</feature>
<feature type="binding site" evidence="1">
    <location>
        <begin position="243"/>
        <end position="247"/>
    </location>
    <ligand>
        <name>Mo-bis(molybdopterin guanine dinucleotide)</name>
        <dbReference type="ChEBI" id="CHEBI:60539"/>
    </ligand>
</feature>
<feature type="binding site" evidence="1">
    <location>
        <begin position="262"/>
        <end position="264"/>
    </location>
    <ligand>
        <name>Mo-bis(molybdopterin guanine dinucleotide)</name>
        <dbReference type="ChEBI" id="CHEBI:60539"/>
    </ligand>
</feature>
<feature type="binding site" evidence="1">
    <location>
        <position position="372"/>
    </location>
    <ligand>
        <name>Mo-bis(molybdopterin guanine dinucleotide)</name>
        <dbReference type="ChEBI" id="CHEBI:60539"/>
    </ligand>
</feature>
<feature type="binding site" evidence="1">
    <location>
        <position position="376"/>
    </location>
    <ligand>
        <name>Mo-bis(molybdopterin guanine dinucleotide)</name>
        <dbReference type="ChEBI" id="CHEBI:60539"/>
    </ligand>
</feature>
<feature type="binding site" evidence="1">
    <location>
        <position position="482"/>
    </location>
    <ligand>
        <name>Mo-bis(molybdopterin guanine dinucleotide)</name>
        <dbReference type="ChEBI" id="CHEBI:60539"/>
    </ligand>
</feature>
<feature type="binding site" evidence="1">
    <location>
        <begin position="508"/>
        <end position="509"/>
    </location>
    <ligand>
        <name>Mo-bis(molybdopterin guanine dinucleotide)</name>
        <dbReference type="ChEBI" id="CHEBI:60539"/>
    </ligand>
</feature>
<feature type="binding site" evidence="1">
    <location>
        <position position="531"/>
    </location>
    <ligand>
        <name>Mo-bis(molybdopterin guanine dinucleotide)</name>
        <dbReference type="ChEBI" id="CHEBI:60539"/>
    </ligand>
</feature>
<feature type="binding site" evidence="1">
    <location>
        <position position="558"/>
    </location>
    <ligand>
        <name>Mo-bis(molybdopterin guanine dinucleotide)</name>
        <dbReference type="ChEBI" id="CHEBI:60539"/>
    </ligand>
</feature>
<feature type="binding site" evidence="1">
    <location>
        <begin position="718"/>
        <end position="727"/>
    </location>
    <ligand>
        <name>Mo-bis(molybdopterin guanine dinucleotide)</name>
        <dbReference type="ChEBI" id="CHEBI:60539"/>
    </ligand>
</feature>
<feature type="binding site" evidence="1">
    <location>
        <position position="794"/>
    </location>
    <ligand>
        <name>substrate</name>
    </ligand>
</feature>
<feature type="binding site" evidence="1">
    <location>
        <position position="802"/>
    </location>
    <ligand>
        <name>Mo-bis(molybdopterin guanine dinucleotide)</name>
        <dbReference type="ChEBI" id="CHEBI:60539"/>
    </ligand>
</feature>
<feature type="binding site" evidence="1">
    <location>
        <position position="819"/>
    </location>
    <ligand>
        <name>Mo-bis(molybdopterin guanine dinucleotide)</name>
        <dbReference type="ChEBI" id="CHEBI:60539"/>
    </ligand>
</feature>
<organism>
    <name type="scientific">Salmonella heidelberg (strain SL476)</name>
    <dbReference type="NCBI Taxonomy" id="454169"/>
    <lineage>
        <taxon>Bacteria</taxon>
        <taxon>Pseudomonadati</taxon>
        <taxon>Pseudomonadota</taxon>
        <taxon>Gammaproteobacteria</taxon>
        <taxon>Enterobacterales</taxon>
        <taxon>Enterobacteriaceae</taxon>
        <taxon>Salmonella</taxon>
    </lineage>
</organism>
<protein>
    <recommendedName>
        <fullName evidence="1">Periplasmic nitrate reductase</fullName>
        <ecNumber evidence="1">1.9.6.1</ecNumber>
    </recommendedName>
</protein>
<name>NAPA_SALHS</name>
<reference key="1">
    <citation type="journal article" date="2011" name="J. Bacteriol.">
        <title>Comparative genomics of 28 Salmonella enterica isolates: evidence for CRISPR-mediated adaptive sublineage evolution.</title>
        <authorList>
            <person name="Fricke W.F."/>
            <person name="Mammel M.K."/>
            <person name="McDermott P.F."/>
            <person name="Tartera C."/>
            <person name="White D.G."/>
            <person name="Leclerc J.E."/>
            <person name="Ravel J."/>
            <person name="Cebula T.A."/>
        </authorList>
    </citation>
    <scope>NUCLEOTIDE SEQUENCE [LARGE SCALE GENOMIC DNA]</scope>
    <source>
        <strain>SL476</strain>
    </source>
</reference>
<sequence length="828" mass="92874">MKLSRRSFMKANAVAAAAAAAGLSVPGVARAVVGQQEAIKWDKAPCRFCGTGCGVLVGTQQGRVVACQGDPDAPVNRGLNCIKGYFLPKIMYGKDRLTQPMLRMKDGSYHKDGEFTPVSWEQAFDVMEEKFKTSLKEKGPEAIGMFGSGQWTIWEGYAAAKLFKAGFRSNNIDPNARHCMASAVVGFMRTFGMDEPMGCYDDIEQADAFVLWGSNMAEMHPILWSRITNRRLSDPNVKVAVLSTFQHRSFELADNGIVFTPQSDLVILNYIANYIIQNNAVNQDFFTKHVNLRKGATDIGYGLRPTHPLEKAAKNPGSDASEPMSFDEYKAFVAEYTLDKTAEMTGVPKDQLEQLAQLYADPNKRVISYWTMGFNQHTRGVWANNLVYNLHLLTGKISQPGCGPFSLTGQPSACGTAREVGTFSHRLPADMVVTNEKHRDICEKHWQIPAGTIPAKVGLHAVAQDRALKDGKLNVYWVMCNNNMQAGPNINEDRMPGWRDPRNFIIVSDPYPTVSALSADLILPTAMWVEKEGAYGNAERRTQFWRQQIKAPGEAKSDLWQLVQFSRRFKTEEVWPEALLAQKPELRGKTLYDVLFATPAVSKFPLSELKEDQLNDESRELGFYLQKGLFEEYAWFGRGHGHDLAPFDDYHNARGLRWPVVEGKETQWRYSEGNDPYVKAGEGYKFYGKPDGKAVIFALPFEPAAESPDNEYDLWLSTGRVLEHWHTGSMTRRVPELHRAFPEAVVFIHPLDAKARDLRRGDKVKVSSRRGEVISIVETRGRNRPPQGLVYMPFFDAAQLVNNLTLDATDPLSKETDFKKCAVKLAKV</sequence>
<evidence type="ECO:0000255" key="1">
    <source>
        <dbReference type="HAMAP-Rule" id="MF_01630"/>
    </source>
</evidence>
<accession>B4TAT3</accession>
<proteinExistence type="inferred from homology"/>
<dbReference type="EC" id="1.9.6.1" evidence="1"/>
<dbReference type="EMBL" id="CP001120">
    <property type="protein sequence ID" value="ACF67238.1"/>
    <property type="molecule type" value="Genomic_DNA"/>
</dbReference>
<dbReference type="RefSeq" id="WP_000778097.1">
    <property type="nucleotide sequence ID" value="NC_011083.1"/>
</dbReference>
<dbReference type="SMR" id="B4TAT3"/>
<dbReference type="KEGG" id="seh:SeHA_C2499"/>
<dbReference type="HOGENOM" id="CLU_000422_13_4_6"/>
<dbReference type="Proteomes" id="UP000001866">
    <property type="component" value="Chromosome"/>
</dbReference>
<dbReference type="GO" id="GO:0016020">
    <property type="term" value="C:membrane"/>
    <property type="evidence" value="ECO:0007669"/>
    <property type="project" value="TreeGrafter"/>
</dbReference>
<dbReference type="GO" id="GO:0009325">
    <property type="term" value="C:nitrate reductase complex"/>
    <property type="evidence" value="ECO:0007669"/>
    <property type="project" value="TreeGrafter"/>
</dbReference>
<dbReference type="GO" id="GO:0042597">
    <property type="term" value="C:periplasmic space"/>
    <property type="evidence" value="ECO:0007669"/>
    <property type="project" value="UniProtKB-SubCell"/>
</dbReference>
<dbReference type="GO" id="GO:0051539">
    <property type="term" value="F:4 iron, 4 sulfur cluster binding"/>
    <property type="evidence" value="ECO:0007669"/>
    <property type="project" value="UniProtKB-KW"/>
</dbReference>
<dbReference type="GO" id="GO:0009055">
    <property type="term" value="F:electron transfer activity"/>
    <property type="evidence" value="ECO:0007669"/>
    <property type="project" value="UniProtKB-UniRule"/>
</dbReference>
<dbReference type="GO" id="GO:0005506">
    <property type="term" value="F:iron ion binding"/>
    <property type="evidence" value="ECO:0007669"/>
    <property type="project" value="UniProtKB-UniRule"/>
</dbReference>
<dbReference type="GO" id="GO:0030151">
    <property type="term" value="F:molybdenum ion binding"/>
    <property type="evidence" value="ECO:0007669"/>
    <property type="project" value="InterPro"/>
</dbReference>
<dbReference type="GO" id="GO:0043546">
    <property type="term" value="F:molybdopterin cofactor binding"/>
    <property type="evidence" value="ECO:0007669"/>
    <property type="project" value="InterPro"/>
</dbReference>
<dbReference type="GO" id="GO:0050140">
    <property type="term" value="F:nitrate reductase (cytochrome) activity"/>
    <property type="evidence" value="ECO:0007669"/>
    <property type="project" value="UniProtKB-EC"/>
</dbReference>
<dbReference type="GO" id="GO:0045333">
    <property type="term" value="P:cellular respiration"/>
    <property type="evidence" value="ECO:0007669"/>
    <property type="project" value="UniProtKB-ARBA"/>
</dbReference>
<dbReference type="GO" id="GO:0006777">
    <property type="term" value="P:Mo-molybdopterin cofactor biosynthetic process"/>
    <property type="evidence" value="ECO:0007669"/>
    <property type="project" value="UniProtKB-UniRule"/>
</dbReference>
<dbReference type="GO" id="GO:0042128">
    <property type="term" value="P:nitrate assimilation"/>
    <property type="evidence" value="ECO:0007669"/>
    <property type="project" value="UniProtKB-UniRule"/>
</dbReference>
<dbReference type="CDD" id="cd02791">
    <property type="entry name" value="MopB_CT_Nitrate-R-NapA-like"/>
    <property type="match status" value="1"/>
</dbReference>
<dbReference type="CDD" id="cd02754">
    <property type="entry name" value="MopB_Nitrate-R-NapA-like"/>
    <property type="match status" value="1"/>
</dbReference>
<dbReference type="FunFam" id="2.40.40.20:FF:000005">
    <property type="entry name" value="Periplasmic nitrate reductase"/>
    <property type="match status" value="1"/>
</dbReference>
<dbReference type="FunFam" id="3.40.228.10:FF:000001">
    <property type="entry name" value="Periplasmic nitrate reductase"/>
    <property type="match status" value="1"/>
</dbReference>
<dbReference type="Gene3D" id="2.40.40.20">
    <property type="match status" value="1"/>
</dbReference>
<dbReference type="Gene3D" id="3.30.200.210">
    <property type="match status" value="1"/>
</dbReference>
<dbReference type="Gene3D" id="3.40.50.740">
    <property type="match status" value="1"/>
</dbReference>
<dbReference type="Gene3D" id="3.40.228.10">
    <property type="entry name" value="Dimethylsulfoxide Reductase, domain 2"/>
    <property type="match status" value="1"/>
</dbReference>
<dbReference type="HAMAP" id="MF_01630">
    <property type="entry name" value="Nitrate_reduct_NapA"/>
    <property type="match status" value="1"/>
</dbReference>
<dbReference type="InterPro" id="IPR009010">
    <property type="entry name" value="Asp_de-COase-like_dom_sf"/>
</dbReference>
<dbReference type="InterPro" id="IPR041957">
    <property type="entry name" value="CT_Nitrate-R-NapA-like"/>
</dbReference>
<dbReference type="InterPro" id="IPR006657">
    <property type="entry name" value="MoPterin_dinucl-bd_dom"/>
</dbReference>
<dbReference type="InterPro" id="IPR006656">
    <property type="entry name" value="Mopterin_OxRdtase"/>
</dbReference>
<dbReference type="InterPro" id="IPR006963">
    <property type="entry name" value="Mopterin_OxRdtase_4Fe-4S_dom"/>
</dbReference>
<dbReference type="InterPro" id="IPR027467">
    <property type="entry name" value="MopterinOxRdtase_cofactor_BS"/>
</dbReference>
<dbReference type="InterPro" id="IPR010051">
    <property type="entry name" value="Periplasm_NO3_reductase_lsu"/>
</dbReference>
<dbReference type="InterPro" id="IPR050123">
    <property type="entry name" value="Prok_molybdopt-oxidoreductase"/>
</dbReference>
<dbReference type="InterPro" id="IPR006311">
    <property type="entry name" value="TAT_signal"/>
</dbReference>
<dbReference type="InterPro" id="IPR019546">
    <property type="entry name" value="TAT_signal_bac_arc"/>
</dbReference>
<dbReference type="NCBIfam" id="TIGR01706">
    <property type="entry name" value="NAPA"/>
    <property type="match status" value="1"/>
</dbReference>
<dbReference type="NCBIfam" id="NF010055">
    <property type="entry name" value="PRK13532.1"/>
    <property type="match status" value="1"/>
</dbReference>
<dbReference type="NCBIfam" id="TIGR01409">
    <property type="entry name" value="TAT_signal_seq"/>
    <property type="match status" value="1"/>
</dbReference>
<dbReference type="PANTHER" id="PTHR43105:SF11">
    <property type="entry name" value="PERIPLASMIC NITRATE REDUCTASE"/>
    <property type="match status" value="1"/>
</dbReference>
<dbReference type="PANTHER" id="PTHR43105">
    <property type="entry name" value="RESPIRATORY NITRATE REDUCTASE"/>
    <property type="match status" value="1"/>
</dbReference>
<dbReference type="Pfam" id="PF04879">
    <property type="entry name" value="Molybdop_Fe4S4"/>
    <property type="match status" value="1"/>
</dbReference>
<dbReference type="Pfam" id="PF00384">
    <property type="entry name" value="Molybdopterin"/>
    <property type="match status" value="1"/>
</dbReference>
<dbReference type="Pfam" id="PF01568">
    <property type="entry name" value="Molydop_binding"/>
    <property type="match status" value="1"/>
</dbReference>
<dbReference type="SMART" id="SM00926">
    <property type="entry name" value="Molybdop_Fe4S4"/>
    <property type="match status" value="1"/>
</dbReference>
<dbReference type="SUPFAM" id="SSF50692">
    <property type="entry name" value="ADC-like"/>
    <property type="match status" value="1"/>
</dbReference>
<dbReference type="SUPFAM" id="SSF53706">
    <property type="entry name" value="Formate dehydrogenase/DMSO reductase, domains 1-3"/>
    <property type="match status" value="1"/>
</dbReference>
<dbReference type="PROSITE" id="PS51669">
    <property type="entry name" value="4FE4S_MOW_BIS_MGD"/>
    <property type="match status" value="1"/>
</dbReference>
<dbReference type="PROSITE" id="PS00551">
    <property type="entry name" value="MOLYBDOPTERIN_PROK_1"/>
    <property type="match status" value="1"/>
</dbReference>
<dbReference type="PROSITE" id="PS51318">
    <property type="entry name" value="TAT"/>
    <property type="match status" value="1"/>
</dbReference>
<keyword id="KW-0004">4Fe-4S</keyword>
<keyword id="KW-0249">Electron transport</keyword>
<keyword id="KW-0408">Iron</keyword>
<keyword id="KW-0411">Iron-sulfur</keyword>
<keyword id="KW-0479">Metal-binding</keyword>
<keyword id="KW-0500">Molybdenum</keyword>
<keyword id="KW-0534">Nitrate assimilation</keyword>
<keyword id="KW-0560">Oxidoreductase</keyword>
<keyword id="KW-0574">Periplasm</keyword>
<keyword id="KW-0732">Signal</keyword>
<keyword id="KW-0813">Transport</keyword>
<comment type="function">
    <text evidence="1">Catalytic subunit of the periplasmic nitrate reductase complex NapAB. Receives electrons from NapB and catalyzes the reduction of nitrate to nitrite.</text>
</comment>
<comment type="catalytic activity">
    <reaction evidence="1">
        <text>2 Fe(II)-[cytochrome] + nitrate + 2 H(+) = 2 Fe(III)-[cytochrome] + nitrite + H2O</text>
        <dbReference type="Rhea" id="RHEA:12909"/>
        <dbReference type="Rhea" id="RHEA-COMP:11777"/>
        <dbReference type="Rhea" id="RHEA-COMP:11778"/>
        <dbReference type="ChEBI" id="CHEBI:15377"/>
        <dbReference type="ChEBI" id="CHEBI:15378"/>
        <dbReference type="ChEBI" id="CHEBI:16301"/>
        <dbReference type="ChEBI" id="CHEBI:17632"/>
        <dbReference type="ChEBI" id="CHEBI:29033"/>
        <dbReference type="ChEBI" id="CHEBI:29034"/>
        <dbReference type="EC" id="1.9.6.1"/>
    </reaction>
</comment>
<comment type="cofactor">
    <cofactor evidence="1">
        <name>[4Fe-4S] cluster</name>
        <dbReference type="ChEBI" id="CHEBI:49883"/>
    </cofactor>
    <text evidence="1">Binds 1 [4Fe-4S] cluster.</text>
</comment>
<comment type="cofactor">
    <cofactor evidence="1">
        <name>Mo-bis(molybdopterin guanine dinucleotide)</name>
        <dbReference type="ChEBI" id="CHEBI:60539"/>
    </cofactor>
    <text evidence="1">Binds 1 molybdenum-bis(molybdopterin guanine dinucleotide) (Mo-bis-MGD) cofactor per subunit.</text>
</comment>
<comment type="subunit">
    <text evidence="1">Component of the periplasmic nitrate reductase NapAB complex composed of NapA and NapB.</text>
</comment>
<comment type="subcellular location">
    <subcellularLocation>
        <location evidence="1">Periplasm</location>
    </subcellularLocation>
</comment>
<comment type="PTM">
    <text evidence="1">Predicted to be exported by the Tat system. The position of the signal peptide cleavage has not been experimentally proven.</text>
</comment>
<comment type="similarity">
    <text evidence="1">Belongs to the prokaryotic molybdopterin-containing oxidoreductase family. NasA/NapA/NarB subfamily.</text>
</comment>